<feature type="chain" id="PRO_0000298755" description="UPF0346 protein MGAS2096_Spy0401">
    <location>
        <begin position="1"/>
        <end position="71"/>
    </location>
</feature>
<accession>Q1JD55</accession>
<comment type="similarity">
    <text evidence="1">Belongs to the UPF0346 family.</text>
</comment>
<protein>
    <recommendedName>
        <fullName evidence="1">UPF0346 protein MGAS2096_Spy0401</fullName>
    </recommendedName>
</protein>
<proteinExistence type="inferred from homology"/>
<gene>
    <name type="ordered locus">MGAS2096_Spy0401</name>
</gene>
<evidence type="ECO:0000255" key="1">
    <source>
        <dbReference type="HAMAP-Rule" id="MF_01538"/>
    </source>
</evidence>
<name>Y401_STRPB</name>
<dbReference type="EMBL" id="CP000261">
    <property type="protein sequence ID" value="ABF35453.1"/>
    <property type="molecule type" value="Genomic_DNA"/>
</dbReference>
<dbReference type="SMR" id="Q1JD55"/>
<dbReference type="KEGG" id="spj:MGAS2096_Spy0401"/>
<dbReference type="HOGENOM" id="CLU_177534_1_0_9"/>
<dbReference type="Gene3D" id="1.10.150.260">
    <property type="entry name" value="YozE SAM-like"/>
    <property type="match status" value="1"/>
</dbReference>
<dbReference type="HAMAP" id="MF_01538">
    <property type="entry name" value="UPF0346"/>
    <property type="match status" value="1"/>
</dbReference>
<dbReference type="InterPro" id="IPR010673">
    <property type="entry name" value="UPF0346"/>
</dbReference>
<dbReference type="InterPro" id="IPR023089">
    <property type="entry name" value="YozE_SAM-like"/>
</dbReference>
<dbReference type="InterPro" id="IPR036806">
    <property type="entry name" value="YozE_SAM-like_sf"/>
</dbReference>
<dbReference type="NCBIfam" id="NF010193">
    <property type="entry name" value="PRK13672.1"/>
    <property type="match status" value="1"/>
</dbReference>
<dbReference type="Pfam" id="PF06855">
    <property type="entry name" value="YozE_SAM_like"/>
    <property type="match status" value="1"/>
</dbReference>
<dbReference type="PIRSF" id="PIRSF037262">
    <property type="entry name" value="UCP037262"/>
    <property type="match status" value="1"/>
</dbReference>
<dbReference type="SUPFAM" id="SSF140652">
    <property type="entry name" value="YozE-like"/>
    <property type="match status" value="1"/>
</dbReference>
<reference key="1">
    <citation type="journal article" date="2006" name="Proc. Natl. Acad. Sci. U.S.A.">
        <title>Molecular genetic anatomy of inter- and intraserotype variation in the human bacterial pathogen group A Streptococcus.</title>
        <authorList>
            <person name="Beres S.B."/>
            <person name="Richter E.W."/>
            <person name="Nagiec M.J."/>
            <person name="Sumby P."/>
            <person name="Porcella S.F."/>
            <person name="DeLeo F.R."/>
            <person name="Musser J.M."/>
        </authorList>
    </citation>
    <scope>NUCLEOTIDE SEQUENCE [LARGE SCALE GENOMIC DNA]</scope>
    <source>
        <strain>MGAS2096</strain>
    </source>
</reference>
<sequence length="71" mass="8481">MRKSFYSWLMTQRNPKSNEPVAILADLVFDDTTFPKHTNDFELISRYLEDQASFSFNLGQFDEIWEDYLAH</sequence>
<organism>
    <name type="scientific">Streptococcus pyogenes serotype M12 (strain MGAS2096)</name>
    <dbReference type="NCBI Taxonomy" id="370553"/>
    <lineage>
        <taxon>Bacteria</taxon>
        <taxon>Bacillati</taxon>
        <taxon>Bacillota</taxon>
        <taxon>Bacilli</taxon>
        <taxon>Lactobacillales</taxon>
        <taxon>Streptococcaceae</taxon>
        <taxon>Streptococcus</taxon>
    </lineage>
</organism>